<feature type="chain" id="PRO_0000162436" description="Regulatory protein RecX">
    <location>
        <begin position="1"/>
        <end position="152"/>
    </location>
</feature>
<reference key="1">
    <citation type="journal article" date="1995" name="Science">
        <title>Whole-genome random sequencing and assembly of Haemophilus influenzae Rd.</title>
        <authorList>
            <person name="Fleischmann R.D."/>
            <person name="Adams M.D."/>
            <person name="White O."/>
            <person name="Clayton R.A."/>
            <person name="Kirkness E.F."/>
            <person name="Kerlavage A.R."/>
            <person name="Bult C.J."/>
            <person name="Tomb J.-F."/>
            <person name="Dougherty B.A."/>
            <person name="Merrick J.M."/>
            <person name="McKenney K."/>
            <person name="Sutton G.G."/>
            <person name="FitzHugh W."/>
            <person name="Fields C.A."/>
            <person name="Gocayne J.D."/>
            <person name="Scott J.D."/>
            <person name="Shirley R."/>
            <person name="Liu L.-I."/>
            <person name="Glodek A."/>
            <person name="Kelley J.M."/>
            <person name="Weidman J.F."/>
            <person name="Phillips C.A."/>
            <person name="Spriggs T."/>
            <person name="Hedblom E."/>
            <person name="Cotton M.D."/>
            <person name="Utterback T.R."/>
            <person name="Hanna M.C."/>
            <person name="Nguyen D.T."/>
            <person name="Saudek D.M."/>
            <person name="Brandon R.C."/>
            <person name="Fine L.D."/>
            <person name="Fritchman J.L."/>
            <person name="Fuhrmann J.L."/>
            <person name="Geoghagen N.S.M."/>
            <person name="Gnehm C.L."/>
            <person name="McDonald L.A."/>
            <person name="Small K.V."/>
            <person name="Fraser C.M."/>
            <person name="Smith H.O."/>
            <person name="Venter J.C."/>
        </authorList>
    </citation>
    <scope>NUCLEOTIDE SEQUENCE [LARGE SCALE GENOMIC DNA]</scope>
    <source>
        <strain>ATCC 51907 / DSM 11121 / KW20 / Rd</strain>
    </source>
</reference>
<comment type="function">
    <text evidence="1">Modulates RecA activity.</text>
</comment>
<comment type="subcellular location">
    <subcellularLocation>
        <location evidence="2">Cytoplasm</location>
    </subcellularLocation>
</comment>
<comment type="similarity">
    <text evidence="2">Belongs to the RecX family.</text>
</comment>
<comment type="sequence caution" evidence="2">
    <conflict type="erroneous initiation">
        <sequence resource="EMBL-CDS" id="AAC22256"/>
    </conflict>
</comment>
<evidence type="ECO:0000250" key="1"/>
<evidence type="ECO:0000305" key="2"/>
<sequence length="152" mass="18313">MSSLAFNYIVNLLSRREYSEFELRNKMQEKNFSEEEIDDALSRCQAKNWQSDRRFSENYLNSRVQKGYGVGRIRQELRQLKGVSSDIIDEVLMESEIDWYEMAENLLRKKFPNYNEQQTPKMKQKIWQYMLSHGFRSDEFADLIGQNQSEWD</sequence>
<gene>
    <name type="primary">recX</name>
    <name type="ordered locus">HI_0599</name>
</gene>
<keyword id="KW-0963">Cytoplasm</keyword>
<keyword id="KW-1185">Reference proteome</keyword>
<proteinExistence type="inferred from homology"/>
<protein>
    <recommendedName>
        <fullName>Regulatory protein RecX</fullName>
    </recommendedName>
</protein>
<organism>
    <name type="scientific">Haemophilus influenzae (strain ATCC 51907 / DSM 11121 / KW20 / Rd)</name>
    <dbReference type="NCBI Taxonomy" id="71421"/>
    <lineage>
        <taxon>Bacteria</taxon>
        <taxon>Pseudomonadati</taxon>
        <taxon>Pseudomonadota</taxon>
        <taxon>Gammaproteobacteria</taxon>
        <taxon>Pasteurellales</taxon>
        <taxon>Pasteurellaceae</taxon>
        <taxon>Haemophilus</taxon>
    </lineage>
</organism>
<name>RECX_HAEIN</name>
<dbReference type="EMBL" id="L42023">
    <property type="protein sequence ID" value="AAC22256.1"/>
    <property type="status" value="ALT_INIT"/>
    <property type="molecule type" value="Genomic_DNA"/>
</dbReference>
<dbReference type="PIR" id="I64079">
    <property type="entry name" value="I64079"/>
</dbReference>
<dbReference type="RefSeq" id="NP_438756.2">
    <property type="nucleotide sequence ID" value="NC_000907.1"/>
</dbReference>
<dbReference type="SMR" id="P43706"/>
<dbReference type="STRING" id="71421.HI_0599"/>
<dbReference type="EnsemblBacteria" id="AAC22256">
    <property type="protein sequence ID" value="AAC22256"/>
    <property type="gene ID" value="HI_0599"/>
</dbReference>
<dbReference type="KEGG" id="hin:HI_0599"/>
<dbReference type="PATRIC" id="fig|71421.8.peg.620"/>
<dbReference type="eggNOG" id="COG2137">
    <property type="taxonomic scope" value="Bacteria"/>
</dbReference>
<dbReference type="HOGENOM" id="CLU_066607_3_2_6"/>
<dbReference type="OrthoDB" id="7066780at2"/>
<dbReference type="PhylomeDB" id="P43706"/>
<dbReference type="BioCyc" id="HINF71421:G1GJ1-609-MONOMER"/>
<dbReference type="Proteomes" id="UP000000579">
    <property type="component" value="Chromosome"/>
</dbReference>
<dbReference type="GO" id="GO:0005737">
    <property type="term" value="C:cytoplasm"/>
    <property type="evidence" value="ECO:0007669"/>
    <property type="project" value="UniProtKB-SubCell"/>
</dbReference>
<dbReference type="GO" id="GO:0006282">
    <property type="term" value="P:regulation of DNA repair"/>
    <property type="evidence" value="ECO:0007669"/>
    <property type="project" value="UniProtKB-UniRule"/>
</dbReference>
<dbReference type="Gene3D" id="1.10.10.10">
    <property type="entry name" value="Winged helix-like DNA-binding domain superfamily/Winged helix DNA-binding domain"/>
    <property type="match status" value="3"/>
</dbReference>
<dbReference type="HAMAP" id="MF_01114">
    <property type="entry name" value="RecX"/>
    <property type="match status" value="1"/>
</dbReference>
<dbReference type="InterPro" id="IPR053926">
    <property type="entry name" value="RecX_HTH_1st"/>
</dbReference>
<dbReference type="InterPro" id="IPR053924">
    <property type="entry name" value="RecX_HTH_2nd"/>
</dbReference>
<dbReference type="InterPro" id="IPR053925">
    <property type="entry name" value="RecX_HTH_3rd"/>
</dbReference>
<dbReference type="InterPro" id="IPR003783">
    <property type="entry name" value="Regulatory_RecX"/>
</dbReference>
<dbReference type="InterPro" id="IPR036388">
    <property type="entry name" value="WH-like_DNA-bd_sf"/>
</dbReference>
<dbReference type="NCBIfam" id="NF001057">
    <property type="entry name" value="PRK00117.3-3"/>
    <property type="match status" value="1"/>
</dbReference>
<dbReference type="PANTHER" id="PTHR33602">
    <property type="entry name" value="REGULATORY PROTEIN RECX FAMILY PROTEIN"/>
    <property type="match status" value="1"/>
</dbReference>
<dbReference type="PANTHER" id="PTHR33602:SF1">
    <property type="entry name" value="REGULATORY PROTEIN RECX FAMILY PROTEIN"/>
    <property type="match status" value="1"/>
</dbReference>
<dbReference type="Pfam" id="PF21982">
    <property type="entry name" value="RecX_HTH1"/>
    <property type="match status" value="1"/>
</dbReference>
<dbReference type="Pfam" id="PF02631">
    <property type="entry name" value="RecX_HTH2"/>
    <property type="match status" value="1"/>
</dbReference>
<dbReference type="Pfam" id="PF21981">
    <property type="entry name" value="RecX_HTH3"/>
    <property type="match status" value="1"/>
</dbReference>
<accession>P43706</accession>